<name>RL36_STRT1</name>
<comment type="similarity">
    <text evidence="1">Belongs to the bacterial ribosomal protein bL36 family.</text>
</comment>
<reference key="1">
    <citation type="journal article" date="2004" name="Nat. Biotechnol.">
        <title>Complete sequence and comparative genome analysis of the dairy bacterium Streptococcus thermophilus.</title>
        <authorList>
            <person name="Bolotin A."/>
            <person name="Quinquis B."/>
            <person name="Renault P."/>
            <person name="Sorokin A."/>
            <person name="Ehrlich S.D."/>
            <person name="Kulakauskas S."/>
            <person name="Lapidus A."/>
            <person name="Goltsman E."/>
            <person name="Mazur M."/>
            <person name="Pusch G.D."/>
            <person name="Fonstein M."/>
            <person name="Overbeek R."/>
            <person name="Kyprides N."/>
            <person name="Purnelle B."/>
            <person name="Prozzi D."/>
            <person name="Ngui K."/>
            <person name="Masuy D."/>
            <person name="Hancy F."/>
            <person name="Burteau S."/>
            <person name="Boutry M."/>
            <person name="Delcour J."/>
            <person name="Goffeau A."/>
            <person name="Hols P."/>
        </authorList>
    </citation>
    <scope>NUCLEOTIDE SEQUENCE [LARGE SCALE GENOMIC DNA]</scope>
    <source>
        <strain>CNRZ 1066</strain>
    </source>
</reference>
<proteinExistence type="inferred from homology"/>
<accession>Q5LXT4</accession>
<sequence>MKVRPSVKPICEYCKVIRRNGRVMVICPTNPKHKQRQG</sequence>
<feature type="chain" id="PRO_0000302316" description="Large ribosomal subunit protein bL36">
    <location>
        <begin position="1"/>
        <end position="38"/>
    </location>
</feature>
<dbReference type="EMBL" id="CP000024">
    <property type="protein sequence ID" value="AAV63424.1"/>
    <property type="molecule type" value="Genomic_DNA"/>
</dbReference>
<dbReference type="RefSeq" id="WP_000868345.1">
    <property type="nucleotide sequence ID" value="NC_006449.1"/>
</dbReference>
<dbReference type="SMR" id="Q5LXT4"/>
<dbReference type="GeneID" id="93860206"/>
<dbReference type="KEGG" id="stc:str1911"/>
<dbReference type="HOGENOM" id="CLU_135723_6_2_9"/>
<dbReference type="GO" id="GO:0005737">
    <property type="term" value="C:cytoplasm"/>
    <property type="evidence" value="ECO:0007669"/>
    <property type="project" value="UniProtKB-ARBA"/>
</dbReference>
<dbReference type="GO" id="GO:1990904">
    <property type="term" value="C:ribonucleoprotein complex"/>
    <property type="evidence" value="ECO:0007669"/>
    <property type="project" value="UniProtKB-KW"/>
</dbReference>
<dbReference type="GO" id="GO:0005840">
    <property type="term" value="C:ribosome"/>
    <property type="evidence" value="ECO:0007669"/>
    <property type="project" value="UniProtKB-KW"/>
</dbReference>
<dbReference type="GO" id="GO:0003735">
    <property type="term" value="F:structural constituent of ribosome"/>
    <property type="evidence" value="ECO:0007669"/>
    <property type="project" value="InterPro"/>
</dbReference>
<dbReference type="GO" id="GO:0006412">
    <property type="term" value="P:translation"/>
    <property type="evidence" value="ECO:0007669"/>
    <property type="project" value="UniProtKB-UniRule"/>
</dbReference>
<dbReference type="HAMAP" id="MF_00251">
    <property type="entry name" value="Ribosomal_bL36"/>
    <property type="match status" value="1"/>
</dbReference>
<dbReference type="InterPro" id="IPR000473">
    <property type="entry name" value="Ribosomal_bL36"/>
</dbReference>
<dbReference type="InterPro" id="IPR035977">
    <property type="entry name" value="Ribosomal_bL36_sp"/>
</dbReference>
<dbReference type="NCBIfam" id="TIGR01022">
    <property type="entry name" value="rpmJ_bact"/>
    <property type="match status" value="1"/>
</dbReference>
<dbReference type="PANTHER" id="PTHR42888">
    <property type="entry name" value="50S RIBOSOMAL PROTEIN L36, CHLOROPLASTIC"/>
    <property type="match status" value="1"/>
</dbReference>
<dbReference type="PANTHER" id="PTHR42888:SF1">
    <property type="entry name" value="LARGE RIBOSOMAL SUBUNIT PROTEIN BL36C"/>
    <property type="match status" value="1"/>
</dbReference>
<dbReference type="Pfam" id="PF00444">
    <property type="entry name" value="Ribosomal_L36"/>
    <property type="match status" value="1"/>
</dbReference>
<dbReference type="SUPFAM" id="SSF57840">
    <property type="entry name" value="Ribosomal protein L36"/>
    <property type="match status" value="1"/>
</dbReference>
<dbReference type="PROSITE" id="PS00828">
    <property type="entry name" value="RIBOSOMAL_L36"/>
    <property type="match status" value="1"/>
</dbReference>
<organism>
    <name type="scientific">Streptococcus thermophilus (strain CNRZ 1066)</name>
    <dbReference type="NCBI Taxonomy" id="299768"/>
    <lineage>
        <taxon>Bacteria</taxon>
        <taxon>Bacillati</taxon>
        <taxon>Bacillota</taxon>
        <taxon>Bacilli</taxon>
        <taxon>Lactobacillales</taxon>
        <taxon>Streptococcaceae</taxon>
        <taxon>Streptococcus</taxon>
    </lineage>
</organism>
<evidence type="ECO:0000255" key="1">
    <source>
        <dbReference type="HAMAP-Rule" id="MF_00251"/>
    </source>
</evidence>
<evidence type="ECO:0000305" key="2"/>
<gene>
    <name evidence="1" type="primary">rpmJ</name>
    <name type="ordered locus">str1911</name>
</gene>
<protein>
    <recommendedName>
        <fullName evidence="1">Large ribosomal subunit protein bL36</fullName>
    </recommendedName>
    <alternativeName>
        <fullName evidence="2">50S ribosomal protein L36</fullName>
    </alternativeName>
</protein>
<keyword id="KW-0687">Ribonucleoprotein</keyword>
<keyword id="KW-0689">Ribosomal protein</keyword>